<keyword id="KW-1003">Cell membrane</keyword>
<keyword id="KW-0256">Endoplasmic reticulum</keyword>
<keyword id="KW-0967">Endosome</keyword>
<keyword id="KW-0472">Membrane</keyword>
<keyword id="KW-1185">Reference proteome</keyword>
<keyword id="KW-0812">Transmembrane</keyword>
<keyword id="KW-1133">Transmembrane helix</keyword>
<reference key="1">
    <citation type="journal article" date="2002" name="J. Neurosci.">
        <title>Identification of genes that are downregulated in the absence of the POU domain transcription factor pou3f1 (Oct-6, Tst-1, SCIP) in sciatic nerve.</title>
        <authorList>
            <person name="Bermingham J.R. Jr."/>
            <person name="Shumas S."/>
            <person name="Whisenhunt T."/>
            <person name="Sirkowski E.E."/>
            <person name="O'Connell S."/>
            <person name="Scherer S.S."/>
            <person name="Rosenfeld M.G."/>
        </authorList>
    </citation>
    <scope>NUCLEOTIDE SEQUENCE [MRNA]</scope>
    <source>
        <strain>Sprague-Dawley</strain>
    </source>
</reference>
<reference key="2">
    <citation type="journal article" date="2003" name="Biochem. Biophys. Res. Commun.">
        <title>Structure, tissue expression pattern, and function of the amino acid transporter rat PAT2.</title>
        <authorList>
            <person name="Chen Z."/>
            <person name="Kennedy D.J."/>
            <person name="Wake K.A."/>
            <person name="Zhuang L."/>
            <person name="Ganapathy V."/>
            <person name="Thwaites D.T."/>
        </authorList>
    </citation>
    <scope>FUNCTION</scope>
    <scope>TRANSPORTER ACTIVITY</scope>
    <scope>BIOPHYSICOCHEMICAL PROPERTIES</scope>
    <scope>SUBCELLULAR LOCATION</scope>
    <scope>TISSUE SPECIFICITY</scope>
</reference>
<reference key="3">
    <citation type="journal article" date="2005" name="Br. J. Pharmacol.">
        <title>Substrate specificity and functional characterisation of the H+/amino acid transporter rat PAT2 (Slc36a2).</title>
        <authorList>
            <person name="Kennedy D.J."/>
            <person name="Gatfield K.M."/>
            <person name="Winpenny J.P."/>
            <person name="Ganapathy V."/>
            <person name="Thwaites D.T."/>
        </authorList>
    </citation>
    <scope>FUNCTION</scope>
    <scope>TRANSPORTER ACTIVITY</scope>
    <scope>BIOPHYSICOCHEMICAL PROPERTIES</scope>
    <scope>ACTIVITY REGULATION</scope>
    <scope>SUBCELLULAR LOCATION</scope>
</reference>
<feature type="chain" id="PRO_0000324821" description="Proton-coupled amino acid transporter 2">
    <location>
        <begin position="1"/>
        <end position="481"/>
    </location>
</feature>
<feature type="topological domain" description="Cytoplasmic" evidence="2">
    <location>
        <begin position="1"/>
        <end position="56"/>
    </location>
</feature>
<feature type="transmembrane region" description="Helical" evidence="2">
    <location>
        <begin position="57"/>
        <end position="77"/>
    </location>
</feature>
<feature type="topological domain" description="Extracellular" evidence="2">
    <location>
        <begin position="78"/>
        <end position="79"/>
    </location>
</feature>
<feature type="transmembrane region" description="Helical" evidence="2">
    <location>
        <begin position="80"/>
        <end position="100"/>
    </location>
</feature>
<feature type="topological domain" description="Cytoplasmic" evidence="2">
    <location>
        <begin position="101"/>
        <end position="146"/>
    </location>
</feature>
<feature type="transmembrane region" description="Helical" evidence="2">
    <location>
        <begin position="147"/>
        <end position="167"/>
    </location>
</feature>
<feature type="topological domain" description="Extracellular" evidence="2">
    <location>
        <begin position="168"/>
        <end position="195"/>
    </location>
</feature>
<feature type="transmembrane region" description="Helical" evidence="2">
    <location>
        <begin position="196"/>
        <end position="216"/>
    </location>
</feature>
<feature type="topological domain" description="Cytoplasmic" evidence="2">
    <location>
        <begin position="217"/>
        <end position="220"/>
    </location>
</feature>
<feature type="transmembrane region" description="Helical" evidence="2">
    <location>
        <begin position="221"/>
        <end position="241"/>
    </location>
</feature>
<feature type="topological domain" description="Extracellular" evidence="2">
    <location>
        <begin position="242"/>
        <end position="262"/>
    </location>
</feature>
<feature type="transmembrane region" description="Helical" evidence="2">
    <location>
        <begin position="263"/>
        <end position="283"/>
    </location>
</feature>
<feature type="topological domain" description="Cytoplasmic" evidence="2">
    <location>
        <begin position="284"/>
        <end position="295"/>
    </location>
</feature>
<feature type="transmembrane region" description="Helical" evidence="2">
    <location>
        <begin position="296"/>
        <end position="316"/>
    </location>
</feature>
<feature type="topological domain" description="Extracellular" evidence="2">
    <location>
        <begin position="317"/>
        <end position="343"/>
    </location>
</feature>
<feature type="transmembrane region" description="Helical" evidence="2">
    <location>
        <begin position="344"/>
        <end position="364"/>
    </location>
</feature>
<feature type="topological domain" description="Cytoplasmic" evidence="2">
    <location>
        <begin position="365"/>
        <end position="377"/>
    </location>
</feature>
<feature type="transmembrane region" description="Helical" evidence="2">
    <location>
        <begin position="378"/>
        <end position="398"/>
    </location>
</feature>
<feature type="topological domain" description="Extracellular" evidence="2">
    <location>
        <begin position="399"/>
        <end position="402"/>
    </location>
</feature>
<feature type="transmembrane region" description="Helical" evidence="2">
    <location>
        <begin position="403"/>
        <end position="423"/>
    </location>
</feature>
<feature type="topological domain" description="Cytoplasmic" evidence="2">
    <location>
        <begin position="424"/>
        <end position="444"/>
    </location>
</feature>
<feature type="transmembrane region" description="Helical" evidence="2">
    <location>
        <begin position="445"/>
        <end position="465"/>
    </location>
</feature>
<feature type="topological domain" description="Extracellular" evidence="2">
    <location>
        <begin position="466"/>
        <end position="481"/>
    </location>
</feature>
<feature type="region of interest" description="Disordered" evidence="3">
    <location>
        <begin position="26"/>
        <end position="49"/>
    </location>
</feature>
<feature type="compositionally biased region" description="Polar residues" evidence="3">
    <location>
        <begin position="29"/>
        <end position="40"/>
    </location>
</feature>
<name>S36A2_RAT</name>
<accession>Q8K415</accession>
<comment type="function">
    <text evidence="4 5">Electrogenic proton/amino acid symporter with a high selectivity for the small side chains amino acids glycine, alanine and proline, where both L- and D-enantiomers are transported. Extension of the backbone length, as in beta-alanine and 4-aminobutanoate or methylation of the amino group, as in sarcosine and N,N-dimethylglycine, are also tolerated but decrease transport efficiency. A free carboxyl group is preferred.</text>
</comment>
<comment type="catalytic activity">
    <reaction evidence="4 5">
        <text>glycine(in) + H(+)(in) = glycine(out) + H(+)(out)</text>
        <dbReference type="Rhea" id="RHEA:28899"/>
        <dbReference type="ChEBI" id="CHEBI:15378"/>
        <dbReference type="ChEBI" id="CHEBI:57305"/>
    </reaction>
</comment>
<comment type="catalytic activity">
    <reaction evidence="4 5">
        <text>L-alanine(in) + H(+)(in) = L-alanine(out) + H(+)(out)</text>
        <dbReference type="Rhea" id="RHEA:29443"/>
        <dbReference type="ChEBI" id="CHEBI:15378"/>
        <dbReference type="ChEBI" id="CHEBI:57972"/>
    </reaction>
</comment>
<comment type="catalytic activity">
    <reaction evidence="5">
        <text>D-alanine(in) + H(+)(in) = D-alanine(out) + H(+)(out)</text>
        <dbReference type="Rhea" id="RHEA:28903"/>
        <dbReference type="ChEBI" id="CHEBI:15378"/>
        <dbReference type="ChEBI" id="CHEBI:57416"/>
    </reaction>
</comment>
<comment type="catalytic activity">
    <reaction evidence="4 5">
        <text>L-proline(out) + H(+)(out) = L-proline(in) + H(+)(in)</text>
        <dbReference type="Rhea" id="RHEA:28963"/>
        <dbReference type="ChEBI" id="CHEBI:15378"/>
        <dbReference type="ChEBI" id="CHEBI:60039"/>
    </reaction>
</comment>
<comment type="catalytic activity">
    <reaction evidence="5">
        <text>D-proline(out) + H(+)(out) = D-proline(in) + H(+)(in)</text>
        <dbReference type="Rhea" id="RHEA:70643"/>
        <dbReference type="ChEBI" id="CHEBI:15378"/>
        <dbReference type="ChEBI" id="CHEBI:57726"/>
    </reaction>
</comment>
<comment type="catalytic activity">
    <reaction evidence="5">
        <text>4-hydroxy-L-proline(in) + H(+)(in) = 4-hydroxy-L-proline(out) + H(+)(out)</text>
        <dbReference type="Rhea" id="RHEA:70663"/>
        <dbReference type="ChEBI" id="CHEBI:15378"/>
        <dbReference type="ChEBI" id="CHEBI:58419"/>
    </reaction>
</comment>
<comment type="catalytic activity">
    <reaction evidence="4">
        <text>L-serine(in) + H(+)(in) = L-serine(out) + H(+)(out)</text>
        <dbReference type="Rhea" id="RHEA:28887"/>
        <dbReference type="ChEBI" id="CHEBI:15378"/>
        <dbReference type="ChEBI" id="CHEBI:33384"/>
    </reaction>
</comment>
<comment type="catalytic activity">
    <reaction evidence="5">
        <text>D-serine(out) + H(+)(out) = D-serine(in) + H(+)(in)</text>
        <dbReference type="Rhea" id="RHEA:70647"/>
        <dbReference type="ChEBI" id="CHEBI:15378"/>
        <dbReference type="ChEBI" id="CHEBI:35247"/>
    </reaction>
</comment>
<comment type="catalytic activity">
    <reaction evidence="4 5">
        <text>beta-alanine(in) + H(+)(in) = beta-alanine(out) + H(+)(out)</text>
        <dbReference type="Rhea" id="RHEA:29459"/>
        <dbReference type="ChEBI" id="CHEBI:15378"/>
        <dbReference type="ChEBI" id="CHEBI:57966"/>
    </reaction>
</comment>
<comment type="catalytic activity">
    <reaction evidence="1">
        <text>4-aminobutanoate(in) + H(+)(in) = 4-aminobutanoate(out) + H(+)(out)</text>
        <dbReference type="Rhea" id="RHEA:28915"/>
        <dbReference type="ChEBI" id="CHEBI:15378"/>
        <dbReference type="ChEBI" id="CHEBI:59888"/>
    </reaction>
</comment>
<comment type="catalytic activity">
    <reaction evidence="5">
        <text>sarcosine(in) + H(+)(in) = sarcosine(out) + H(+)(out)</text>
        <dbReference type="Rhea" id="RHEA:70655"/>
        <dbReference type="ChEBI" id="CHEBI:15378"/>
        <dbReference type="ChEBI" id="CHEBI:57433"/>
    </reaction>
</comment>
<comment type="catalytic activity">
    <reaction evidence="5">
        <text>N,N-dimethylglycine(in) + H(+)(in) = N,N-dimethylglycine(out) + H(+)(out)</text>
        <dbReference type="Rhea" id="RHEA:70659"/>
        <dbReference type="ChEBI" id="CHEBI:15378"/>
        <dbReference type="ChEBI" id="CHEBI:58251"/>
    </reaction>
</comment>
<comment type="activity regulation">
    <text evidence="5">Inhibited by L- and D-pipecolic acid, nipecotic acid, isonipecotic acid, L- and D-cycloserine, and L-2-azetidine-carboxylate.</text>
</comment>
<comment type="biophysicochemical properties">
    <kinetics>
        <KM evidence="4">0.486 mM for glycine</KM>
        <KM evidence="5">0.172 mM for proline</KM>
    </kinetics>
</comment>
<comment type="subcellular location">
    <subcellularLocation>
        <location evidence="4 5">Cell membrane</location>
        <topology evidence="2">Multi-pass membrane protein</topology>
    </subcellularLocation>
    <subcellularLocation>
        <location evidence="1">Endoplasmic reticulum membrane</location>
    </subcellularLocation>
    <subcellularLocation>
        <location evidence="1">Recycling endosome membrane</location>
    </subcellularLocation>
</comment>
<comment type="tissue specificity">
    <text evidence="4">Expressed in lung and spleen, and to a lower extent in brain, heart, kidney and skeletal muscle.</text>
</comment>
<comment type="similarity">
    <text evidence="9">Belongs to the amino acid/polyamine transporter 2 family.</text>
</comment>
<protein>
    <recommendedName>
        <fullName>Proton-coupled amino acid transporter 2</fullName>
        <shortName evidence="7 8">Proton/amino acid transporter 2</shortName>
        <shortName evidence="8">rPAT2</shortName>
    </recommendedName>
    <alternativeName>
        <fullName evidence="10">Solute carrier family 36 member 2</fullName>
    </alternativeName>
    <alternativeName>
        <fullName evidence="6">Transmembrane domain rich protein 1</fullName>
        <shortName evidence="6">Tramdorin-1</shortName>
    </alternativeName>
</protein>
<proteinExistence type="evidence at protein level"/>
<gene>
    <name evidence="10" type="primary">Slc36a2</name>
    <name evidence="7" type="synonym">Pat2</name>
    <name evidence="6" type="synonym">Tramd1</name>
</gene>
<organism>
    <name type="scientific">Rattus norvegicus</name>
    <name type="common">Rat</name>
    <dbReference type="NCBI Taxonomy" id="10116"/>
    <lineage>
        <taxon>Eukaryota</taxon>
        <taxon>Metazoa</taxon>
        <taxon>Chordata</taxon>
        <taxon>Craniata</taxon>
        <taxon>Vertebrata</taxon>
        <taxon>Euteleostomi</taxon>
        <taxon>Mammalia</taxon>
        <taxon>Eutheria</taxon>
        <taxon>Euarchontoglires</taxon>
        <taxon>Glires</taxon>
        <taxon>Rodentia</taxon>
        <taxon>Myomorpha</taxon>
        <taxon>Muroidea</taxon>
        <taxon>Muridae</taxon>
        <taxon>Murinae</taxon>
        <taxon>Rattus</taxon>
    </lineage>
</organism>
<evidence type="ECO:0000250" key="1">
    <source>
        <dbReference type="UniProtKB" id="Q8BHK3"/>
    </source>
</evidence>
<evidence type="ECO:0000255" key="2"/>
<evidence type="ECO:0000256" key="3">
    <source>
        <dbReference type="SAM" id="MobiDB-lite"/>
    </source>
</evidence>
<evidence type="ECO:0000269" key="4">
    <source>
    </source>
</evidence>
<evidence type="ECO:0000269" key="5">
    <source>
    </source>
</evidence>
<evidence type="ECO:0000303" key="6">
    <source>
    </source>
</evidence>
<evidence type="ECO:0000303" key="7">
    <source>
    </source>
</evidence>
<evidence type="ECO:0000303" key="8">
    <source>
    </source>
</evidence>
<evidence type="ECO:0000305" key="9"/>
<evidence type="ECO:0000312" key="10">
    <source>
        <dbReference type="RGD" id="620492"/>
    </source>
</evidence>
<sequence length="481" mass="52278">MSVTKSAGSPQVAATVKLDLVSFPESAKKVQSQDPNPVNGSSSESSEKTKGITGFQTLVHLVKGNMGTGILGLPLAVKNAGILMGPLSLLVMGLIACHCMHILVRCAQRFCHRLNKPFMDYGDTVMHGLASSPNTWLQSHAHWGRHAVSFFLIVTQLGFCCVYIVFLADNLKQVVEAVNSTTISCHKNETVVLTPTIDSRLYMLAFLPVLGLLVFIRNLRVLTIFSLLANVSMLVSLVIIGQYIIQGIPDPSQLPLVASWKTYPLFFGTAIFSFESIGVVLPLENKMKDARRFPTILSLGMSIITTLYIAIGALGYLRFGDDIKASITLNLPNCWLYQSVKLLYVVGILCTHALQFYVPAEIIIPLAVSQVSKRWALPVDLSIRLALVCVTCMLAILIPRLDLVLSLVGSVSSSALALIIPPLLEVTTYYGEGMSPLTITKDALISILGFMGFVVGTYQALDELIRSGNSLPLSNSTMFIQ</sequence>
<dbReference type="EMBL" id="AF512430">
    <property type="protein sequence ID" value="AAM44855.1"/>
    <property type="molecule type" value="mRNA"/>
</dbReference>
<dbReference type="RefSeq" id="NP_647555.1">
    <property type="nucleotide sequence ID" value="NM_139339.1"/>
</dbReference>
<dbReference type="SMR" id="Q8K415"/>
<dbReference type="FunCoup" id="Q8K415">
    <property type="interactions" value="559"/>
</dbReference>
<dbReference type="STRING" id="10116.ENSRNOP00000016440"/>
<dbReference type="iPTMnet" id="Q8K415"/>
<dbReference type="PhosphoSitePlus" id="Q8K415"/>
<dbReference type="PaxDb" id="10116-ENSRNOP00000016440"/>
<dbReference type="GeneID" id="246235"/>
<dbReference type="KEGG" id="rno:246235"/>
<dbReference type="UCSC" id="RGD:620492">
    <property type="organism name" value="rat"/>
</dbReference>
<dbReference type="AGR" id="RGD:620492"/>
<dbReference type="CTD" id="153201"/>
<dbReference type="RGD" id="620492">
    <property type="gene designation" value="Slc36a2"/>
</dbReference>
<dbReference type="eggNOG" id="KOG1304">
    <property type="taxonomic scope" value="Eukaryota"/>
</dbReference>
<dbReference type="InParanoid" id="Q8K415"/>
<dbReference type="OrthoDB" id="1684102at2759"/>
<dbReference type="PhylomeDB" id="Q8K415"/>
<dbReference type="Reactome" id="R-RNO-352230">
    <property type="pathway name" value="Amino acid transport across the plasma membrane"/>
</dbReference>
<dbReference type="Reactome" id="R-RNO-428559">
    <property type="pathway name" value="Proton-coupled neutral amino acid transporters"/>
</dbReference>
<dbReference type="SABIO-RK" id="Q8K415"/>
<dbReference type="PRO" id="PR:Q8K415"/>
<dbReference type="Proteomes" id="UP000002494">
    <property type="component" value="Unplaced"/>
</dbReference>
<dbReference type="GO" id="GO:0005789">
    <property type="term" value="C:endoplasmic reticulum membrane"/>
    <property type="evidence" value="ECO:0000250"/>
    <property type="project" value="UniProtKB"/>
</dbReference>
<dbReference type="GO" id="GO:0005886">
    <property type="term" value="C:plasma membrane"/>
    <property type="evidence" value="ECO:0000250"/>
    <property type="project" value="UniProtKB"/>
</dbReference>
<dbReference type="GO" id="GO:0055038">
    <property type="term" value="C:recycling endosome membrane"/>
    <property type="evidence" value="ECO:0000250"/>
    <property type="project" value="UniProtKB"/>
</dbReference>
<dbReference type="GO" id="GO:0005774">
    <property type="term" value="C:vacuolar membrane"/>
    <property type="evidence" value="ECO:0000318"/>
    <property type="project" value="GO_Central"/>
</dbReference>
<dbReference type="GO" id="GO:0022853">
    <property type="term" value="F:active monoatomic ion transmembrane transporter activity"/>
    <property type="evidence" value="ECO:0007669"/>
    <property type="project" value="UniProtKB-ARBA"/>
</dbReference>
<dbReference type="GO" id="GO:0005280">
    <property type="term" value="F:amino acid:proton symporter activity"/>
    <property type="evidence" value="ECO:0000314"/>
    <property type="project" value="UniProtKB"/>
</dbReference>
<dbReference type="GO" id="GO:0015187">
    <property type="term" value="F:glycine transmembrane transporter activity"/>
    <property type="evidence" value="ECO:0000314"/>
    <property type="project" value="RGD"/>
</dbReference>
<dbReference type="GO" id="GO:0015180">
    <property type="term" value="F:L-alanine transmembrane transporter activity"/>
    <property type="evidence" value="ECO:0000266"/>
    <property type="project" value="RGD"/>
</dbReference>
<dbReference type="GO" id="GO:0015193">
    <property type="term" value="F:L-proline transmembrane transporter activity"/>
    <property type="evidence" value="ECO:0000266"/>
    <property type="project" value="RGD"/>
</dbReference>
<dbReference type="GO" id="GO:0005297">
    <property type="term" value="F:proline:proton symporter activity"/>
    <property type="evidence" value="ECO:0000314"/>
    <property type="project" value="UniProtKB"/>
</dbReference>
<dbReference type="GO" id="GO:0032973">
    <property type="term" value="P:amino acid export across plasma membrane"/>
    <property type="evidence" value="ECO:0000314"/>
    <property type="project" value="RGD"/>
</dbReference>
<dbReference type="GO" id="GO:0015816">
    <property type="term" value="P:glycine transport"/>
    <property type="evidence" value="ECO:0000266"/>
    <property type="project" value="RGD"/>
</dbReference>
<dbReference type="GO" id="GO:0015808">
    <property type="term" value="P:L-alanine transport"/>
    <property type="evidence" value="ECO:0000266"/>
    <property type="project" value="RGD"/>
</dbReference>
<dbReference type="GO" id="GO:1900925">
    <property type="term" value="P:positive regulation of glycine import across plasma membrane"/>
    <property type="evidence" value="ECO:0000314"/>
    <property type="project" value="RGD"/>
</dbReference>
<dbReference type="GO" id="GO:0035524">
    <property type="term" value="P:proline transmembrane transport"/>
    <property type="evidence" value="ECO:0000314"/>
    <property type="project" value="RGD"/>
</dbReference>
<dbReference type="GO" id="GO:0015824">
    <property type="term" value="P:proline transport"/>
    <property type="evidence" value="ECO:0000266"/>
    <property type="project" value="RGD"/>
</dbReference>
<dbReference type="GO" id="GO:1902600">
    <property type="term" value="P:proton transmembrane transport"/>
    <property type="evidence" value="ECO:0000266"/>
    <property type="project" value="RGD"/>
</dbReference>
<dbReference type="GO" id="GO:0070881">
    <property type="term" value="P:regulation of proline transport"/>
    <property type="evidence" value="ECO:0000314"/>
    <property type="project" value="RGD"/>
</dbReference>
<dbReference type="GO" id="GO:0010155">
    <property type="term" value="P:regulation of proton transport"/>
    <property type="evidence" value="ECO:0000314"/>
    <property type="project" value="RGD"/>
</dbReference>
<dbReference type="InterPro" id="IPR013057">
    <property type="entry name" value="AA_transpt_TM"/>
</dbReference>
<dbReference type="PANTHER" id="PTHR22950">
    <property type="entry name" value="AMINO ACID TRANSPORTER"/>
    <property type="match status" value="1"/>
</dbReference>
<dbReference type="PANTHER" id="PTHR22950:SF185">
    <property type="entry name" value="PROTON-COUPLED AMINO ACID TRANSPORTER 2"/>
    <property type="match status" value="1"/>
</dbReference>
<dbReference type="Pfam" id="PF01490">
    <property type="entry name" value="Aa_trans"/>
    <property type="match status" value="1"/>
</dbReference>